<reference key="1">
    <citation type="journal article" date="2000" name="Comp. Biochem. Physiol.">
        <title>Molecular cloning and expression of an otolith matrix protein cDNA from the rainbow trout, Oncorhynchus mykiss.</title>
        <authorList>
            <person name="Murayama E."/>
            <person name="Okuno A."/>
            <person name="Ohira T."/>
            <person name="Takagi Y."/>
            <person name="Nagasawa H."/>
        </authorList>
    </citation>
    <scope>NUCLEOTIDE SEQUENCE [MRNA]</scope>
    <scope>TISSUE SPECIFICITY</scope>
    <source>
        <tissue>Otolith</tissue>
    </source>
</reference>
<reference key="2">
    <citation type="journal article" date="2004" name="Histochem. Cell Biol.">
        <title>Immunohistochemical localization of two otolith matrix proteins in the otolith and inner ear of the rainbow trout, Oncorhynchus mykiss: comparative aspects between the adult inner ear and embryonic otocysts.</title>
        <authorList>
            <person name="Murayama E."/>
            <person name="Takagi Y."/>
            <person name="Nagasawa H."/>
        </authorList>
    </citation>
    <scope>INTERACTION WITH OTOL1</scope>
    <scope>SUBCELLULAR LOCATION</scope>
    <scope>TISSUE SPECIFICITY</scope>
</reference>
<proteinExistence type="evidence at protein level"/>
<keyword id="KW-0964">Secreted</keyword>
<keyword id="KW-0732">Signal</keyword>
<dbReference type="EMBL" id="AB030389">
    <property type="protein sequence ID" value="BAA90399.1"/>
    <property type="molecule type" value="mRNA"/>
</dbReference>
<dbReference type="RefSeq" id="NP_001117664.1">
    <property type="nucleotide sequence ID" value="NM_001124192.1"/>
</dbReference>
<dbReference type="SMR" id="Q9IBF7"/>
<dbReference type="MEROPS" id="S60.976"/>
<dbReference type="GeneID" id="100135796"/>
<dbReference type="KEGG" id="omy:100135796"/>
<dbReference type="CTD" id="565818"/>
<dbReference type="OrthoDB" id="9981115at2759"/>
<dbReference type="Proteomes" id="UP000694395">
    <property type="component" value="Unplaced"/>
</dbReference>
<dbReference type="GO" id="GO:0005769">
    <property type="term" value="C:early endosome"/>
    <property type="evidence" value="ECO:0007669"/>
    <property type="project" value="TreeGrafter"/>
</dbReference>
<dbReference type="GO" id="GO:0005615">
    <property type="term" value="C:extracellular space"/>
    <property type="evidence" value="ECO:0007669"/>
    <property type="project" value="TreeGrafter"/>
</dbReference>
<dbReference type="GO" id="GO:0005886">
    <property type="term" value="C:plasma membrane"/>
    <property type="evidence" value="ECO:0007669"/>
    <property type="project" value="TreeGrafter"/>
</dbReference>
<dbReference type="GO" id="GO:0055037">
    <property type="term" value="C:recycling endosome"/>
    <property type="evidence" value="ECO:0007669"/>
    <property type="project" value="TreeGrafter"/>
</dbReference>
<dbReference type="GO" id="GO:0006826">
    <property type="term" value="P:iron ion transport"/>
    <property type="evidence" value="ECO:0007669"/>
    <property type="project" value="TreeGrafter"/>
</dbReference>
<dbReference type="CDD" id="cd13529">
    <property type="entry name" value="PBP2_transferrin"/>
    <property type="match status" value="1"/>
</dbReference>
<dbReference type="FunFam" id="3.40.190.10:FF:000095">
    <property type="entry name" value="Lactotransferrin"/>
    <property type="match status" value="1"/>
</dbReference>
<dbReference type="Gene3D" id="3.40.190.10">
    <property type="entry name" value="Periplasmic binding protein-like II"/>
    <property type="match status" value="2"/>
</dbReference>
<dbReference type="InterPro" id="IPR001156">
    <property type="entry name" value="Transferrin-like_dom"/>
</dbReference>
<dbReference type="PANTHER" id="PTHR11485:SF49">
    <property type="entry name" value="OTOLITH MATRIX PROTEIN 1"/>
    <property type="match status" value="1"/>
</dbReference>
<dbReference type="PANTHER" id="PTHR11485">
    <property type="entry name" value="TRANSFERRIN"/>
    <property type="match status" value="1"/>
</dbReference>
<dbReference type="Pfam" id="PF00405">
    <property type="entry name" value="Transferrin"/>
    <property type="match status" value="1"/>
</dbReference>
<dbReference type="PRINTS" id="PR00422">
    <property type="entry name" value="TRANSFERRIN"/>
</dbReference>
<dbReference type="SMART" id="SM00094">
    <property type="entry name" value="TR_FER"/>
    <property type="match status" value="1"/>
</dbReference>
<dbReference type="SUPFAM" id="SSF53850">
    <property type="entry name" value="Periplasmic binding protein-like II"/>
    <property type="match status" value="1"/>
</dbReference>
<dbReference type="PROSITE" id="PS51408">
    <property type="entry name" value="TRANSFERRIN_LIKE_4"/>
    <property type="match status" value="1"/>
</dbReference>
<accession>Q9IBF7</accession>
<evidence type="ECO:0000250" key="1">
    <source>
        <dbReference type="UniProtKB" id="Q0VIL3"/>
    </source>
</evidence>
<evidence type="ECO:0000255" key="2"/>
<evidence type="ECO:0000255" key="3">
    <source>
        <dbReference type="PROSITE-ProRule" id="PRU00741"/>
    </source>
</evidence>
<evidence type="ECO:0000269" key="4">
    <source>
    </source>
</evidence>
<evidence type="ECO:0000269" key="5">
    <source>
    </source>
</evidence>
<feature type="signal peptide" evidence="2">
    <location>
        <begin position="1"/>
        <end position="23"/>
    </location>
</feature>
<feature type="chain" id="PRO_0000332931" description="Otolith matrix protein 1">
    <location>
        <begin position="24"/>
        <end position="367"/>
    </location>
</feature>
<feature type="domain" description="Transferrin-like" evidence="3">
    <location>
        <begin position="27"/>
        <end position="363"/>
    </location>
</feature>
<name>OTOMP_ONCMY</name>
<gene>
    <name type="primary">otomp</name>
    <name type="synonym">omp1</name>
</gene>
<sequence>MDRLDRRLAATLLLFSFISFSTQKTSISWCVVSEAEEQKCLDLAGSATARNIRGTLLCVRGQSPTDCMEKIKNGTADAAAMFADDIYTAGWCFGLELAAGESYNGVDGISYYVVALARRSSSDLSLLEMHERSSCHPRIRTTVGWTVPIGFLVNTSQISVDEQCNFPKAVGDFFGYSCVPGVKDREHDPRGSNPKYLCEACIGDDNERHICVNNHRERHYGEAGALRCVAENLGDVAFVKHTTIFDNMDGNNMESWAMDLELEDLKLLCPDGSEAGPFDHETCHLAVVPANAVVVRPEDKCRVWKYLERLQNAFGNTTMFSSVGYTQSDLLFSDSTHHLLRVVGSYTSWLGPSYTTVLQAFECESLC</sequence>
<protein>
    <recommendedName>
        <fullName>Otolith matrix protein 1</fullName>
        <shortName>OMP-1</shortName>
    </recommendedName>
</protein>
<comment type="function">
    <text evidence="1">Required for normal otolith growth and deposition of otolin-1 in the otolith.</text>
</comment>
<comment type="subunit">
    <text evidence="5">Interacts with OTOL1.</text>
</comment>
<comment type="subcellular location">
    <subcellularLocation>
        <location evidence="5">Secreted</location>
    </subcellularLocation>
</comment>
<comment type="tissue specificity">
    <text evidence="4 5">Expressed in the sacculus during the day.</text>
</comment>
<comment type="similarity">
    <text evidence="3">Belongs to the transferrin family.</text>
</comment>
<organism>
    <name type="scientific">Oncorhynchus mykiss</name>
    <name type="common">Rainbow trout</name>
    <name type="synonym">Salmo gairdneri</name>
    <dbReference type="NCBI Taxonomy" id="8022"/>
    <lineage>
        <taxon>Eukaryota</taxon>
        <taxon>Metazoa</taxon>
        <taxon>Chordata</taxon>
        <taxon>Craniata</taxon>
        <taxon>Vertebrata</taxon>
        <taxon>Euteleostomi</taxon>
        <taxon>Actinopterygii</taxon>
        <taxon>Neopterygii</taxon>
        <taxon>Teleostei</taxon>
        <taxon>Protacanthopterygii</taxon>
        <taxon>Salmoniformes</taxon>
        <taxon>Salmonidae</taxon>
        <taxon>Salmoninae</taxon>
        <taxon>Oncorhynchus</taxon>
    </lineage>
</organism>